<protein>
    <recommendedName>
        <fullName evidence="1">Foldase protein PrsA</fullName>
        <ecNumber evidence="1">5.2.1.8</ecNumber>
    </recommendedName>
</protein>
<keyword id="KW-1003">Cell membrane</keyword>
<keyword id="KW-0413">Isomerase</keyword>
<keyword id="KW-0449">Lipoprotein</keyword>
<keyword id="KW-0472">Membrane</keyword>
<keyword id="KW-0564">Palmitate</keyword>
<keyword id="KW-1185">Reference proteome</keyword>
<keyword id="KW-0697">Rotamase</keyword>
<keyword id="KW-0732">Signal</keyword>
<feature type="signal peptide" evidence="1">
    <location>
        <begin position="1"/>
        <end position="20"/>
    </location>
</feature>
<feature type="chain" id="PRO_1000085063" description="Foldase protein PrsA">
    <location>
        <begin position="21"/>
        <end position="313"/>
    </location>
</feature>
<feature type="domain" description="PpiC" evidence="1">
    <location>
        <begin position="143"/>
        <end position="241"/>
    </location>
</feature>
<feature type="lipid moiety-binding region" description="N-palmitoyl cysteine" evidence="1">
    <location>
        <position position="21"/>
    </location>
</feature>
<feature type="lipid moiety-binding region" description="S-diacylglycerol cysteine" evidence="1">
    <location>
        <position position="21"/>
    </location>
</feature>
<proteinExistence type="inferred from homology"/>
<dbReference type="EC" id="5.2.1.8" evidence="1"/>
<dbReference type="EMBL" id="CP000410">
    <property type="protein sequence ID" value="ABJ55379.1"/>
    <property type="molecule type" value="Genomic_DNA"/>
</dbReference>
<dbReference type="RefSeq" id="WP_000727935.1">
    <property type="nucleotide sequence ID" value="NZ_JAMLJR010000004.1"/>
</dbReference>
<dbReference type="SMR" id="Q04KU8"/>
<dbReference type="PaxDb" id="373153-SPD_0868"/>
<dbReference type="KEGG" id="spd:SPD_0868"/>
<dbReference type="eggNOG" id="COG0760">
    <property type="taxonomic scope" value="Bacteria"/>
</dbReference>
<dbReference type="HOGENOM" id="CLU_034646_6_0_9"/>
<dbReference type="BioCyc" id="SPNE373153:G1G6V-952-MONOMER"/>
<dbReference type="Proteomes" id="UP000001452">
    <property type="component" value="Chromosome"/>
</dbReference>
<dbReference type="GO" id="GO:0005886">
    <property type="term" value="C:plasma membrane"/>
    <property type="evidence" value="ECO:0007669"/>
    <property type="project" value="UniProtKB-SubCell"/>
</dbReference>
<dbReference type="GO" id="GO:0003755">
    <property type="term" value="F:peptidyl-prolyl cis-trans isomerase activity"/>
    <property type="evidence" value="ECO:0007669"/>
    <property type="project" value="UniProtKB-UniRule"/>
</dbReference>
<dbReference type="GO" id="GO:0006457">
    <property type="term" value="P:protein folding"/>
    <property type="evidence" value="ECO:0007669"/>
    <property type="project" value="UniProtKB-UniRule"/>
</dbReference>
<dbReference type="Gene3D" id="3.10.50.40">
    <property type="match status" value="1"/>
</dbReference>
<dbReference type="HAMAP" id="MF_01145">
    <property type="entry name" value="Foldase_PrsA"/>
    <property type="match status" value="1"/>
</dbReference>
<dbReference type="InterPro" id="IPR023059">
    <property type="entry name" value="Foldase_PrsA"/>
</dbReference>
<dbReference type="InterPro" id="IPR046357">
    <property type="entry name" value="PPIase_dom_sf"/>
</dbReference>
<dbReference type="InterPro" id="IPR000297">
    <property type="entry name" value="PPIase_PpiC"/>
</dbReference>
<dbReference type="InterPro" id="IPR050245">
    <property type="entry name" value="PrsA_foldase"/>
</dbReference>
<dbReference type="InterPro" id="IPR027304">
    <property type="entry name" value="Trigger_fact/SurA_dom_sf"/>
</dbReference>
<dbReference type="NCBIfam" id="NF002361">
    <property type="entry name" value="PRK01326.1"/>
    <property type="match status" value="1"/>
</dbReference>
<dbReference type="PANTHER" id="PTHR47245:SF1">
    <property type="entry name" value="FOLDASE PROTEIN PRSA"/>
    <property type="match status" value="1"/>
</dbReference>
<dbReference type="PANTHER" id="PTHR47245">
    <property type="entry name" value="PEPTIDYLPROLYL ISOMERASE"/>
    <property type="match status" value="1"/>
</dbReference>
<dbReference type="Pfam" id="PF00639">
    <property type="entry name" value="Rotamase"/>
    <property type="match status" value="1"/>
</dbReference>
<dbReference type="SUPFAM" id="SSF54534">
    <property type="entry name" value="FKBP-like"/>
    <property type="match status" value="1"/>
</dbReference>
<dbReference type="SUPFAM" id="SSF109998">
    <property type="entry name" value="Triger factor/SurA peptide-binding domain-like"/>
    <property type="match status" value="1"/>
</dbReference>
<dbReference type="PROSITE" id="PS50198">
    <property type="entry name" value="PPIC_PPIASE_2"/>
    <property type="match status" value="1"/>
</dbReference>
<dbReference type="PROSITE" id="PS51257">
    <property type="entry name" value="PROKAR_LIPOPROTEIN"/>
    <property type="match status" value="1"/>
</dbReference>
<sequence>MKKKLLAGAITLLSVATLAACSKGSEGADLISMKGDVITEHQFYEQVKNNPSAQQVLLNMTIQKVFEKQYGSELDDKEVDDTIAEEKKQYGENYQRVLSQAGMTLETRKAQIRTSKLVELAVKKVAEAELTDEAYKKAFDEYTPDVTAQIIRLNNEDKAKEVLEKAKAEGADFAQLAKDNSTDEKTKENGGEITFDSASTEVPEQVKKAAFALDVDGVSDVITATGTQAYSSQYYIVKLTKKTEKSSNIDDYKEKLKTVILTQKQNDSTFVQSIIGKELQAANIKVKDQAFQNIFTQYIGGGDSSSSSSTSNE</sequence>
<accession>Q04KU8</accession>
<reference key="1">
    <citation type="journal article" date="2007" name="J. Bacteriol.">
        <title>Genome sequence of Avery's virulent serotype 2 strain D39 of Streptococcus pneumoniae and comparison with that of unencapsulated laboratory strain R6.</title>
        <authorList>
            <person name="Lanie J.A."/>
            <person name="Ng W.-L."/>
            <person name="Kazmierczak K.M."/>
            <person name="Andrzejewski T.M."/>
            <person name="Davidsen T.M."/>
            <person name="Wayne K.J."/>
            <person name="Tettelin H."/>
            <person name="Glass J.I."/>
            <person name="Winkler M.E."/>
        </authorList>
    </citation>
    <scope>NUCLEOTIDE SEQUENCE [LARGE SCALE GENOMIC DNA]</scope>
    <source>
        <strain>D39 / NCTC 7466</strain>
    </source>
</reference>
<comment type="function">
    <text evidence="1">Plays a major role in protein secretion by helping the post-translocational extracellular folding of several secreted proteins.</text>
</comment>
<comment type="catalytic activity">
    <reaction evidence="1">
        <text>[protein]-peptidylproline (omega=180) = [protein]-peptidylproline (omega=0)</text>
        <dbReference type="Rhea" id="RHEA:16237"/>
        <dbReference type="Rhea" id="RHEA-COMP:10747"/>
        <dbReference type="Rhea" id="RHEA-COMP:10748"/>
        <dbReference type="ChEBI" id="CHEBI:83833"/>
        <dbReference type="ChEBI" id="CHEBI:83834"/>
        <dbReference type="EC" id="5.2.1.8"/>
    </reaction>
</comment>
<comment type="subcellular location">
    <subcellularLocation>
        <location evidence="1">Cell membrane</location>
        <topology evidence="1">Lipid-anchor</topology>
    </subcellularLocation>
</comment>
<comment type="similarity">
    <text evidence="1">Belongs to the PrsA family.</text>
</comment>
<name>PRSA_STRP2</name>
<organism>
    <name type="scientific">Streptococcus pneumoniae serotype 2 (strain D39 / NCTC 7466)</name>
    <dbReference type="NCBI Taxonomy" id="373153"/>
    <lineage>
        <taxon>Bacteria</taxon>
        <taxon>Bacillati</taxon>
        <taxon>Bacillota</taxon>
        <taxon>Bacilli</taxon>
        <taxon>Lactobacillales</taxon>
        <taxon>Streptococcaceae</taxon>
        <taxon>Streptococcus</taxon>
    </lineage>
</organism>
<gene>
    <name evidence="1" type="primary">prsA</name>
    <name type="ordered locus">SPD_0868</name>
</gene>
<evidence type="ECO:0000255" key="1">
    <source>
        <dbReference type="HAMAP-Rule" id="MF_01145"/>
    </source>
</evidence>